<evidence type="ECO:0000255" key="1">
    <source>
        <dbReference type="HAMAP-Rule" id="MF_01551"/>
    </source>
</evidence>
<organism>
    <name type="scientific">Pseudoalteromonas translucida (strain TAC 125)</name>
    <dbReference type="NCBI Taxonomy" id="326442"/>
    <lineage>
        <taxon>Bacteria</taxon>
        <taxon>Pseudomonadati</taxon>
        <taxon>Pseudomonadota</taxon>
        <taxon>Gammaproteobacteria</taxon>
        <taxon>Alteromonadales</taxon>
        <taxon>Pseudoalteromonadaceae</taxon>
        <taxon>Pseudoalteromonas</taxon>
    </lineage>
</organism>
<accession>Q3IKB2</accession>
<protein>
    <recommendedName>
        <fullName evidence="1">Ribosomal RNA large subunit methyltransferase M</fullName>
        <ecNumber evidence="1">2.1.1.186</ecNumber>
    </recommendedName>
    <alternativeName>
        <fullName evidence="1">23S rRNA (cytidine2498-2'-O)-methyltransferase</fullName>
    </alternativeName>
    <alternativeName>
        <fullName evidence="1">23S rRNA 2'-O-ribose methyltransferase RlmM</fullName>
    </alternativeName>
</protein>
<feature type="chain" id="PRO_0000070415" description="Ribosomal RNA large subunit methyltransferase M">
    <location>
        <begin position="1"/>
        <end position="361"/>
    </location>
</feature>
<feature type="active site" description="Proton acceptor" evidence="1">
    <location>
        <position position="304"/>
    </location>
</feature>
<feature type="binding site" evidence="1">
    <location>
        <position position="186"/>
    </location>
    <ligand>
        <name>S-adenosyl-L-methionine</name>
        <dbReference type="ChEBI" id="CHEBI:59789"/>
    </ligand>
</feature>
<feature type="binding site" evidence="1">
    <location>
        <begin position="219"/>
        <end position="222"/>
    </location>
    <ligand>
        <name>S-adenosyl-L-methionine</name>
        <dbReference type="ChEBI" id="CHEBI:59789"/>
    </ligand>
</feature>
<feature type="binding site" evidence="1">
    <location>
        <position position="238"/>
    </location>
    <ligand>
        <name>S-adenosyl-L-methionine</name>
        <dbReference type="ChEBI" id="CHEBI:59789"/>
    </ligand>
</feature>
<feature type="binding site" evidence="1">
    <location>
        <position position="258"/>
    </location>
    <ligand>
        <name>S-adenosyl-L-methionine</name>
        <dbReference type="ChEBI" id="CHEBI:59789"/>
    </ligand>
</feature>
<feature type="binding site" evidence="1">
    <location>
        <position position="275"/>
    </location>
    <ligand>
        <name>S-adenosyl-L-methionine</name>
        <dbReference type="ChEBI" id="CHEBI:59789"/>
    </ligand>
</feature>
<dbReference type="EC" id="2.1.1.186" evidence="1"/>
<dbReference type="EMBL" id="CR954246">
    <property type="protein sequence ID" value="CAI86142.1"/>
    <property type="molecule type" value="Genomic_DNA"/>
</dbReference>
<dbReference type="SMR" id="Q3IKB2"/>
<dbReference type="STRING" id="326442.PSHAa1067"/>
<dbReference type="KEGG" id="pha:PSHAa1067"/>
<dbReference type="eggNOG" id="COG2933">
    <property type="taxonomic scope" value="Bacteria"/>
</dbReference>
<dbReference type="HOGENOM" id="CLU_043780_0_0_6"/>
<dbReference type="BioCyc" id="PHAL326442:PSHA_RS05255-MONOMER"/>
<dbReference type="Proteomes" id="UP000006843">
    <property type="component" value="Chromosome I"/>
</dbReference>
<dbReference type="GO" id="GO:0005737">
    <property type="term" value="C:cytoplasm"/>
    <property type="evidence" value="ECO:0007669"/>
    <property type="project" value="UniProtKB-SubCell"/>
</dbReference>
<dbReference type="GO" id="GO:0008757">
    <property type="term" value="F:S-adenosylmethionine-dependent methyltransferase activity"/>
    <property type="evidence" value="ECO:0007669"/>
    <property type="project" value="UniProtKB-UniRule"/>
</dbReference>
<dbReference type="GO" id="GO:0032259">
    <property type="term" value="P:methylation"/>
    <property type="evidence" value="ECO:0007669"/>
    <property type="project" value="UniProtKB-KW"/>
</dbReference>
<dbReference type="GO" id="GO:0006364">
    <property type="term" value="P:rRNA processing"/>
    <property type="evidence" value="ECO:0007669"/>
    <property type="project" value="UniProtKB-UniRule"/>
</dbReference>
<dbReference type="Gene3D" id="3.30.2300.20">
    <property type="match status" value="1"/>
</dbReference>
<dbReference type="Gene3D" id="3.30.70.2810">
    <property type="match status" value="1"/>
</dbReference>
<dbReference type="Gene3D" id="3.40.50.150">
    <property type="entry name" value="Vaccinia Virus protein VP39"/>
    <property type="match status" value="1"/>
</dbReference>
<dbReference type="HAMAP" id="MF_01551">
    <property type="entry name" value="23SrRNA_methyltr_M"/>
    <property type="match status" value="1"/>
</dbReference>
<dbReference type="InterPro" id="IPR040739">
    <property type="entry name" value="RlmM_FDX"/>
</dbReference>
<dbReference type="InterPro" id="IPR048646">
    <property type="entry name" value="RlmM_THUMP-like"/>
</dbReference>
<dbReference type="InterPro" id="IPR002877">
    <property type="entry name" value="RNA_MeTrfase_FtsJ_dom"/>
</dbReference>
<dbReference type="InterPro" id="IPR011224">
    <property type="entry name" value="rRNA_MeTrfase_M"/>
</dbReference>
<dbReference type="InterPro" id="IPR029063">
    <property type="entry name" value="SAM-dependent_MTases_sf"/>
</dbReference>
<dbReference type="NCBIfam" id="NF008734">
    <property type="entry name" value="PRK11760.1"/>
    <property type="match status" value="1"/>
</dbReference>
<dbReference type="PANTHER" id="PTHR37524">
    <property type="entry name" value="RIBOSOMAL RNA LARGE SUBUNIT METHYLTRANSFERASE M"/>
    <property type="match status" value="1"/>
</dbReference>
<dbReference type="PANTHER" id="PTHR37524:SF2">
    <property type="entry name" value="RIBOSOMAL RNA METHYLTRANSFERASE FTSJ DOMAIN-CONTAINING PROTEIN"/>
    <property type="match status" value="1"/>
</dbReference>
<dbReference type="Pfam" id="PF01728">
    <property type="entry name" value="FtsJ"/>
    <property type="match status" value="1"/>
</dbReference>
<dbReference type="Pfam" id="PF18125">
    <property type="entry name" value="RlmM_FDX"/>
    <property type="match status" value="1"/>
</dbReference>
<dbReference type="Pfam" id="PF21239">
    <property type="entry name" value="RLMM_N"/>
    <property type="match status" value="1"/>
</dbReference>
<dbReference type="PIRSF" id="PIRSF028774">
    <property type="entry name" value="UCP028774"/>
    <property type="match status" value="1"/>
</dbReference>
<dbReference type="SUPFAM" id="SSF53335">
    <property type="entry name" value="S-adenosyl-L-methionine-dependent methyltransferases"/>
    <property type="match status" value="1"/>
</dbReference>
<proteinExistence type="inferred from homology"/>
<reference key="1">
    <citation type="journal article" date="2005" name="Genome Res.">
        <title>Coping with cold: the genome of the versatile marine Antarctica bacterium Pseudoalteromonas haloplanktis TAC125.</title>
        <authorList>
            <person name="Medigue C."/>
            <person name="Krin E."/>
            <person name="Pascal G."/>
            <person name="Barbe V."/>
            <person name="Bernsel A."/>
            <person name="Bertin P.N."/>
            <person name="Cheung F."/>
            <person name="Cruveiller S."/>
            <person name="D'Amico S."/>
            <person name="Duilio A."/>
            <person name="Fang G."/>
            <person name="Feller G."/>
            <person name="Ho C."/>
            <person name="Mangenot S."/>
            <person name="Marino G."/>
            <person name="Nilsson J."/>
            <person name="Parrilli E."/>
            <person name="Rocha E.P.C."/>
            <person name="Rouy Z."/>
            <person name="Sekowska A."/>
            <person name="Tutino M.L."/>
            <person name="Vallenet D."/>
            <person name="von Heijne G."/>
            <person name="Danchin A."/>
        </authorList>
    </citation>
    <scope>NUCLEOTIDE SEQUENCE [LARGE SCALE GENOMIC DNA]</scope>
    <source>
        <strain>TAC 125</strain>
    </source>
</reference>
<comment type="function">
    <text evidence="1">Catalyzes the 2'-O-methylation at nucleotide C2498 in 23S rRNA.</text>
</comment>
<comment type="catalytic activity">
    <reaction evidence="1">
        <text>cytidine(2498) in 23S rRNA + S-adenosyl-L-methionine = 2'-O-methylcytidine(2498) in 23S rRNA + S-adenosyl-L-homocysteine + H(+)</text>
        <dbReference type="Rhea" id="RHEA:42788"/>
        <dbReference type="Rhea" id="RHEA-COMP:10244"/>
        <dbReference type="Rhea" id="RHEA-COMP:10245"/>
        <dbReference type="ChEBI" id="CHEBI:15378"/>
        <dbReference type="ChEBI" id="CHEBI:57856"/>
        <dbReference type="ChEBI" id="CHEBI:59789"/>
        <dbReference type="ChEBI" id="CHEBI:74495"/>
        <dbReference type="ChEBI" id="CHEBI:82748"/>
        <dbReference type="EC" id="2.1.1.186"/>
    </reaction>
</comment>
<comment type="subunit">
    <text evidence="1">Monomer.</text>
</comment>
<comment type="subcellular location">
    <subcellularLocation>
        <location evidence="1">Cytoplasm</location>
    </subcellularLocation>
</comment>
<comment type="similarity">
    <text evidence="1">Belongs to the class I-like SAM-binding methyltransferase superfamily. RNA methyltransferase RlmE family. RlmM subfamily.</text>
</comment>
<sequence>MSSVVIYCRSGFENDAAAEITFHAAEQGFAGYVKAKPNTGYVIYECFDAQHGDEIIKKVDFKNMVFARQWFAGTLIENMPVEDRVGAVVEAAKDFTLCSELRVETPDTNEGKELLTFCKKISTPLKKALEKRNIVLREPKANRPVMHVLFLTNNTAYVGYSYSFNNSPFFMGILRLRMPSDAPSRSTLKLDEAFNVFIPEQQRESRVAAGMRSVDLGACPGGWTYQLVRRGMFVSAIDNGPMNDDLMQTGQVKHFRADGFKYRPEKRNITWLVCDMVEKPTKVTSLMIDWAVNAYAKELIFNLKLPMKKRFDSVYECLSMIRAELEKYGISYELQAKHLYHDREEVTVHLNVTKVPQSLYS</sequence>
<name>RLMM_PSET1</name>
<keyword id="KW-0963">Cytoplasm</keyword>
<keyword id="KW-0489">Methyltransferase</keyword>
<keyword id="KW-1185">Reference proteome</keyword>
<keyword id="KW-0698">rRNA processing</keyword>
<keyword id="KW-0949">S-adenosyl-L-methionine</keyword>
<keyword id="KW-0808">Transferase</keyword>
<gene>
    <name evidence="1" type="primary">rlmM</name>
    <name type="ordered locus">PSHAa1067</name>
</gene>